<sequence>TEQAAPAADDPEGMVKASCASCHGQNLEGGVGPALADVGSRNAMPAGMVDPAK</sequence>
<proteinExistence type="evidence at protein level"/>
<feature type="chain" id="PRO_0000108398" description="Cytochrome c-552">
    <location>
        <begin position="1"/>
        <end position="53" status="greater than"/>
    </location>
</feature>
<feature type="binding site" description="covalent">
    <location>
        <position position="19"/>
    </location>
    <ligand>
        <name>heme c</name>
        <dbReference type="ChEBI" id="CHEBI:61717"/>
    </ligand>
</feature>
<feature type="binding site" description="covalent">
    <location>
        <position position="22"/>
    </location>
    <ligand>
        <name>heme c</name>
        <dbReference type="ChEBI" id="CHEBI:61717"/>
    </ligand>
</feature>
<feature type="binding site" description="axial binding residue">
    <location>
        <position position="23"/>
    </location>
    <ligand>
        <name>heme c</name>
        <dbReference type="ChEBI" id="CHEBI:61717"/>
    </ligand>
    <ligandPart>
        <name>Fe</name>
        <dbReference type="ChEBI" id="CHEBI:18248"/>
    </ligandPart>
</feature>
<feature type="binding site" description="axial binding residue">
    <location>
        <position position="44"/>
    </location>
    <ligand>
        <name>heme c</name>
        <dbReference type="ChEBI" id="CHEBI:61717"/>
    </ligand>
    <ligandPart>
        <name>Fe</name>
        <dbReference type="ChEBI" id="CHEBI:18248"/>
    </ligandPart>
</feature>
<feature type="non-consecutive residues" evidence="1">
    <location>
        <begin position="41"/>
        <end position="42"/>
    </location>
</feature>
<feature type="non-terminal residue">
    <location>
        <position position="53"/>
    </location>
</feature>
<dbReference type="PIR" id="S32547">
    <property type="entry name" value="S32547"/>
</dbReference>
<dbReference type="SMR" id="P23036"/>
<dbReference type="GO" id="GO:0005886">
    <property type="term" value="C:plasma membrane"/>
    <property type="evidence" value="ECO:0007669"/>
    <property type="project" value="UniProtKB-SubCell"/>
</dbReference>
<dbReference type="GO" id="GO:0009055">
    <property type="term" value="F:electron transfer activity"/>
    <property type="evidence" value="ECO:0007669"/>
    <property type="project" value="InterPro"/>
</dbReference>
<dbReference type="GO" id="GO:0020037">
    <property type="term" value="F:heme binding"/>
    <property type="evidence" value="ECO:0007669"/>
    <property type="project" value="InterPro"/>
</dbReference>
<dbReference type="GO" id="GO:0046872">
    <property type="term" value="F:metal ion binding"/>
    <property type="evidence" value="ECO:0007669"/>
    <property type="project" value="UniProtKB-KW"/>
</dbReference>
<dbReference type="Gene3D" id="1.10.760.10">
    <property type="entry name" value="Cytochrome c-like domain"/>
    <property type="match status" value="1"/>
</dbReference>
<dbReference type="InterPro" id="IPR009056">
    <property type="entry name" value="Cyt_c-like_dom"/>
</dbReference>
<dbReference type="InterPro" id="IPR036909">
    <property type="entry name" value="Cyt_c-like_dom_sf"/>
</dbReference>
<dbReference type="Pfam" id="PF13442">
    <property type="entry name" value="Cytochrome_CBB3"/>
    <property type="match status" value="1"/>
</dbReference>
<dbReference type="SUPFAM" id="SSF46626">
    <property type="entry name" value="Cytochrome c"/>
    <property type="match status" value="1"/>
</dbReference>
<dbReference type="PROSITE" id="PS51007">
    <property type="entry name" value="CYTC"/>
    <property type="match status" value="1"/>
</dbReference>
<protein>
    <recommendedName>
        <fullName>Cytochrome c-552</fullName>
    </recommendedName>
    <alternativeName>
        <fullName>Cytochrome c552</fullName>
    </alternativeName>
</protein>
<evidence type="ECO:0000305" key="1"/>
<keyword id="KW-1003">Cell membrane</keyword>
<keyword id="KW-0903">Direct protein sequencing</keyword>
<keyword id="KW-0249">Electron transport</keyword>
<keyword id="KW-0349">Heme</keyword>
<keyword id="KW-0408">Iron</keyword>
<keyword id="KW-0472">Membrane</keyword>
<keyword id="KW-0479">Metal-binding</keyword>
<keyword id="KW-0812">Transmembrane</keyword>
<keyword id="KW-0813">Transport</keyword>
<accession>P23036</accession>
<comment type="subcellular location">
    <subcellularLocation>
        <location>Cell membrane</location>
        <topology>Single-pass membrane protein</topology>
    </subcellularLocation>
</comment>
<comment type="PTM">
    <text>Binds 1 heme c group covalently per subunit.</text>
</comment>
<name>CY552_SCHAZ</name>
<organism>
    <name type="scientific">Schinkia azotoformans</name>
    <name type="common">Bacillus azotoformans</name>
    <dbReference type="NCBI Taxonomy" id="1454"/>
    <lineage>
        <taxon>Bacteria</taxon>
        <taxon>Bacillati</taxon>
        <taxon>Bacillota</taxon>
        <taxon>Bacilli</taxon>
        <taxon>Bacillales</taxon>
        <taxon>Bacillaceae</taxon>
        <taxon>Calidifontibacillus/Schinkia group</taxon>
        <taxon>Schinkia</taxon>
    </lineage>
</organism>
<reference key="1">
    <citation type="journal article" date="1991" name="Biochim. Biophys. Acta">
        <title>Two structurally different cytochromes c from Bacillus azotoformans: on the evolution of Gram-positive bacteria.</title>
        <authorList>
            <person name="Hreggvidsson G.O."/>
        </authorList>
    </citation>
    <scope>PROTEIN SEQUENCE</scope>
    <source>
        <strain>ATCC 29788 / DSM 1046 / JCM 12210 / CCM 2849 / CIP R925 / NBRC 15712 / NCIMB 11859 / BAI / 1</strain>
    </source>
</reference>